<dbReference type="EC" id="6.1.1.4" evidence="1"/>
<dbReference type="EMBL" id="CP000685">
    <property type="protein sequence ID" value="ABQ03600.1"/>
    <property type="molecule type" value="Genomic_DNA"/>
</dbReference>
<dbReference type="RefSeq" id="WP_012022656.1">
    <property type="nucleotide sequence ID" value="NC_009441.1"/>
</dbReference>
<dbReference type="SMR" id="A5FMG2"/>
<dbReference type="STRING" id="376686.Fjoh_0565"/>
<dbReference type="KEGG" id="fjo:Fjoh_0565"/>
<dbReference type="eggNOG" id="COG0495">
    <property type="taxonomic scope" value="Bacteria"/>
</dbReference>
<dbReference type="HOGENOM" id="CLU_004427_0_0_10"/>
<dbReference type="OrthoDB" id="9810365at2"/>
<dbReference type="Proteomes" id="UP000006694">
    <property type="component" value="Chromosome"/>
</dbReference>
<dbReference type="GO" id="GO:0005829">
    <property type="term" value="C:cytosol"/>
    <property type="evidence" value="ECO:0007669"/>
    <property type="project" value="TreeGrafter"/>
</dbReference>
<dbReference type="GO" id="GO:0002161">
    <property type="term" value="F:aminoacyl-tRNA deacylase activity"/>
    <property type="evidence" value="ECO:0007669"/>
    <property type="project" value="InterPro"/>
</dbReference>
<dbReference type="GO" id="GO:0005524">
    <property type="term" value="F:ATP binding"/>
    <property type="evidence" value="ECO:0007669"/>
    <property type="project" value="UniProtKB-UniRule"/>
</dbReference>
<dbReference type="GO" id="GO:0004823">
    <property type="term" value="F:leucine-tRNA ligase activity"/>
    <property type="evidence" value="ECO:0007669"/>
    <property type="project" value="UniProtKB-UniRule"/>
</dbReference>
<dbReference type="GO" id="GO:0006429">
    <property type="term" value="P:leucyl-tRNA aminoacylation"/>
    <property type="evidence" value="ECO:0007669"/>
    <property type="project" value="UniProtKB-UniRule"/>
</dbReference>
<dbReference type="CDD" id="cd07958">
    <property type="entry name" value="Anticodon_Ia_Leu_BEm"/>
    <property type="match status" value="1"/>
</dbReference>
<dbReference type="FunFam" id="3.40.50.620:FF:000056">
    <property type="entry name" value="Leucine--tRNA ligase"/>
    <property type="match status" value="1"/>
</dbReference>
<dbReference type="FunFam" id="3.40.50.620:FF:000060">
    <property type="entry name" value="Leucine--tRNA ligase"/>
    <property type="match status" value="1"/>
</dbReference>
<dbReference type="FunFam" id="1.10.730.10:FF:000011">
    <property type="entry name" value="Leucine--tRNA ligase chloroplastic/mitochondrial"/>
    <property type="match status" value="1"/>
</dbReference>
<dbReference type="Gene3D" id="3.40.50.620">
    <property type="entry name" value="HUPs"/>
    <property type="match status" value="3"/>
</dbReference>
<dbReference type="Gene3D" id="1.10.730.10">
    <property type="entry name" value="Isoleucyl-tRNA Synthetase, Domain 1"/>
    <property type="match status" value="1"/>
</dbReference>
<dbReference type="HAMAP" id="MF_00049_B">
    <property type="entry name" value="Leu_tRNA_synth_B"/>
    <property type="match status" value="1"/>
</dbReference>
<dbReference type="InterPro" id="IPR001412">
    <property type="entry name" value="aa-tRNA-synth_I_CS"/>
</dbReference>
<dbReference type="InterPro" id="IPR002300">
    <property type="entry name" value="aa-tRNA-synth_Ia"/>
</dbReference>
<dbReference type="InterPro" id="IPR002302">
    <property type="entry name" value="Leu-tRNA-ligase"/>
</dbReference>
<dbReference type="InterPro" id="IPR025709">
    <property type="entry name" value="Leu_tRNA-synth_edit"/>
</dbReference>
<dbReference type="InterPro" id="IPR013155">
    <property type="entry name" value="M/V/L/I-tRNA-synth_anticd-bd"/>
</dbReference>
<dbReference type="InterPro" id="IPR014729">
    <property type="entry name" value="Rossmann-like_a/b/a_fold"/>
</dbReference>
<dbReference type="InterPro" id="IPR009080">
    <property type="entry name" value="tRNAsynth_Ia_anticodon-bd"/>
</dbReference>
<dbReference type="InterPro" id="IPR009008">
    <property type="entry name" value="Val/Leu/Ile-tRNA-synth_edit"/>
</dbReference>
<dbReference type="NCBIfam" id="TIGR00396">
    <property type="entry name" value="leuS_bact"/>
    <property type="match status" value="1"/>
</dbReference>
<dbReference type="PANTHER" id="PTHR43740:SF2">
    <property type="entry name" value="LEUCINE--TRNA LIGASE, MITOCHONDRIAL"/>
    <property type="match status" value="1"/>
</dbReference>
<dbReference type="PANTHER" id="PTHR43740">
    <property type="entry name" value="LEUCYL-TRNA SYNTHETASE"/>
    <property type="match status" value="1"/>
</dbReference>
<dbReference type="Pfam" id="PF08264">
    <property type="entry name" value="Anticodon_1"/>
    <property type="match status" value="1"/>
</dbReference>
<dbReference type="Pfam" id="PF00133">
    <property type="entry name" value="tRNA-synt_1"/>
    <property type="match status" value="1"/>
</dbReference>
<dbReference type="Pfam" id="PF13603">
    <property type="entry name" value="tRNA-synt_1_2"/>
    <property type="match status" value="1"/>
</dbReference>
<dbReference type="PRINTS" id="PR00985">
    <property type="entry name" value="TRNASYNTHLEU"/>
</dbReference>
<dbReference type="SUPFAM" id="SSF47323">
    <property type="entry name" value="Anticodon-binding domain of a subclass of class I aminoacyl-tRNA synthetases"/>
    <property type="match status" value="1"/>
</dbReference>
<dbReference type="SUPFAM" id="SSF52374">
    <property type="entry name" value="Nucleotidylyl transferase"/>
    <property type="match status" value="1"/>
</dbReference>
<dbReference type="SUPFAM" id="SSF50677">
    <property type="entry name" value="ValRS/IleRS/LeuRS editing domain"/>
    <property type="match status" value="1"/>
</dbReference>
<dbReference type="PROSITE" id="PS00178">
    <property type="entry name" value="AA_TRNA_LIGASE_I"/>
    <property type="match status" value="1"/>
</dbReference>
<gene>
    <name evidence="1" type="primary">leuS</name>
    <name type="ordered locus">Fjoh_0565</name>
</gene>
<sequence>MKYNPNEIEAKWQKYWAENQTFAAKNNSEKPKHYVLDMFPYPSGAGLHVGHPLGYIASDVYSRFKRHQGFNVLHPMGYDSFGLPAEQYAIQTGQRPEDTTRVNIDGGVDKEGKQIAGYRKQLDKIGFSFDWAREVRTSNPDYYKHTQWIFIQLFNSWYCRKQGKAFDISELVTVFEESGNALVEAVCDDNVTIFTADEWKSYSDDQKEKILLQYRMTYLAETEVNWCPGLGTVLANDEIVNGVSERGGFPVIRKKMTQWSMRISAYAERLLQGLNDIDWSESIKESQRNWIGKSVGALVTFNVKNHDEVIEVFTTRPDTIFGVTFMTLAPEHDLVAKITTPEQKEAVEAYIEKTAKRSERERMADVKTISGVFTGAYAEHPFTKEAIPVWIGDYVLAGYGTGAVMAVPCGDERDYAFANFFKGQNGMQEIKNIFANVDISEAAYGSKDNVEIAASDFLNGLNYKDATAKAIYKLEEIGQGKGKTNYRLRDAVFSRQRYWGEPFPVYYVNGLPKMIDTQHLPIILPEVEKYLPTEDGLPPLGNAAVWAWDIKENKVVNTDLVDNVSIFPLELNTMPGWAGSSWYWMRYMDAHNENEFASKEALAYWENVDLYIGGSEHATGHLLYSRFWNKFLKDKGFAPTEEPFKKLINQGMILGTTAYVYRLEGTNTFVSKNKIKGQNVQPIRVDVHFVNSSDELNIEKFKAWREDFNTAEFIFDENGKYIVGREVEKMSKSYYNVVTPDDICAEYGADTLRLYEMFLGPLEQAKPWNTAGISGVFGFLKKLWRLYFDDNGLIVNNDEPTKDNLKSLHKTIKKVAEDIENFSFNTSVSQFMICVNELSSQNCHSRAILEPLAILVSPYAPHIAEELWAQLGHKTSISEVAFPVFDAKHLVETNKEYPVSFNGKMRFTIELPLDLTAAQIEEIVMKDERTQKQLDGRIPNKVIIVPGKIINLVG</sequence>
<proteinExistence type="inferred from homology"/>
<organism>
    <name type="scientific">Flavobacterium johnsoniae (strain ATCC 17061 / DSM 2064 / JCM 8514 / BCRC 14874 / CCUG 350202 / NBRC 14942 / NCIMB 11054 / UW101)</name>
    <name type="common">Cytophaga johnsonae</name>
    <dbReference type="NCBI Taxonomy" id="376686"/>
    <lineage>
        <taxon>Bacteria</taxon>
        <taxon>Pseudomonadati</taxon>
        <taxon>Bacteroidota</taxon>
        <taxon>Flavobacteriia</taxon>
        <taxon>Flavobacteriales</taxon>
        <taxon>Flavobacteriaceae</taxon>
        <taxon>Flavobacterium</taxon>
    </lineage>
</organism>
<keyword id="KW-0030">Aminoacyl-tRNA synthetase</keyword>
<keyword id="KW-0067">ATP-binding</keyword>
<keyword id="KW-0963">Cytoplasm</keyword>
<keyword id="KW-0436">Ligase</keyword>
<keyword id="KW-0547">Nucleotide-binding</keyword>
<keyword id="KW-0648">Protein biosynthesis</keyword>
<name>SYL_FLAJ1</name>
<comment type="catalytic activity">
    <reaction evidence="1">
        <text>tRNA(Leu) + L-leucine + ATP = L-leucyl-tRNA(Leu) + AMP + diphosphate</text>
        <dbReference type="Rhea" id="RHEA:11688"/>
        <dbReference type="Rhea" id="RHEA-COMP:9613"/>
        <dbReference type="Rhea" id="RHEA-COMP:9622"/>
        <dbReference type="ChEBI" id="CHEBI:30616"/>
        <dbReference type="ChEBI" id="CHEBI:33019"/>
        <dbReference type="ChEBI" id="CHEBI:57427"/>
        <dbReference type="ChEBI" id="CHEBI:78442"/>
        <dbReference type="ChEBI" id="CHEBI:78494"/>
        <dbReference type="ChEBI" id="CHEBI:456215"/>
        <dbReference type="EC" id="6.1.1.4"/>
    </reaction>
</comment>
<comment type="subcellular location">
    <subcellularLocation>
        <location evidence="1">Cytoplasm</location>
    </subcellularLocation>
</comment>
<comment type="similarity">
    <text evidence="1">Belongs to the class-I aminoacyl-tRNA synthetase family.</text>
</comment>
<feature type="chain" id="PRO_1000074833" description="Leucine--tRNA ligase">
    <location>
        <begin position="1"/>
        <end position="954"/>
    </location>
</feature>
<feature type="short sequence motif" description="'HIGH' region">
    <location>
        <begin position="40"/>
        <end position="51"/>
    </location>
</feature>
<feature type="short sequence motif" description="'KMSKS' region">
    <location>
        <begin position="729"/>
        <end position="733"/>
    </location>
</feature>
<feature type="binding site" evidence="1">
    <location>
        <position position="732"/>
    </location>
    <ligand>
        <name>ATP</name>
        <dbReference type="ChEBI" id="CHEBI:30616"/>
    </ligand>
</feature>
<accession>A5FMG2</accession>
<reference key="1">
    <citation type="journal article" date="2009" name="Appl. Environ. Microbiol.">
        <title>Novel features of the polysaccharide-digesting gliding bacterium Flavobacterium johnsoniae as revealed by genome sequence analysis.</title>
        <authorList>
            <person name="McBride M.J."/>
            <person name="Xie G."/>
            <person name="Martens E.C."/>
            <person name="Lapidus A."/>
            <person name="Henrissat B."/>
            <person name="Rhodes R.G."/>
            <person name="Goltsman E."/>
            <person name="Wang W."/>
            <person name="Xu J."/>
            <person name="Hunnicutt D.W."/>
            <person name="Staroscik A.M."/>
            <person name="Hoover T.R."/>
            <person name="Cheng Y.Q."/>
            <person name="Stein J.L."/>
        </authorList>
    </citation>
    <scope>NUCLEOTIDE SEQUENCE [LARGE SCALE GENOMIC DNA]</scope>
    <source>
        <strain>ATCC 17061 / DSM 2064 / JCM 8514 / BCRC 14874 / CCUG 350202 / NBRC 14942 / NCIMB 11054 / UW101</strain>
    </source>
</reference>
<evidence type="ECO:0000255" key="1">
    <source>
        <dbReference type="HAMAP-Rule" id="MF_00049"/>
    </source>
</evidence>
<protein>
    <recommendedName>
        <fullName evidence="1">Leucine--tRNA ligase</fullName>
        <ecNumber evidence="1">6.1.1.4</ecNumber>
    </recommendedName>
    <alternativeName>
        <fullName evidence="1">Leucyl-tRNA synthetase</fullName>
        <shortName evidence="1">LeuRS</shortName>
    </alternativeName>
</protein>